<comment type="function">
    <text evidence="6">Endo-acting xylanase which specifically cleaves internal linkages on the xylan backbone, releasing xylooligosaccharides. Is able to hydrolyze glucuronoxylan and the arabinoxylan from wheat.</text>
</comment>
<comment type="catalytic activity">
    <reaction evidence="6">
        <text>Endohydrolysis of (1-&gt;4)-beta-D-xylosidic linkages in xylans.</text>
        <dbReference type="EC" id="3.2.1.8"/>
    </reaction>
</comment>
<comment type="pathway">
    <text>Glycan degradation; xylan degradation.</text>
</comment>
<comment type="subcellular location">
    <subcellularLocation>
        <location evidence="6">Secreted</location>
    </subcellularLocation>
</comment>
<comment type="induction">
    <text evidence="6">Induced when the bacterium is cultured on xylan or beta-glucan but not on medium containing mannan. Is repressed by glucose. Transcription of xyn11B occurs later than transcription of xyn11A. Is expressed at maximum level in mid-log phase, and its transcription persists into the late exponential and early stationary phases.</text>
</comment>
<comment type="similarity">
    <text evidence="7">Belongs to the glycosyl hydrolase 11 (cellulase G) family.</text>
</comment>
<reference key="1">
    <citation type="journal article" date="2002" name="J. Bacteriol.">
        <title>Evidence for temporal regulation of the two Pseudomonas cellulosa xylanases belonging to glycoside hydrolase family 11.</title>
        <authorList>
            <person name="Emami K."/>
            <person name="Nagy T."/>
            <person name="Fontes C.M."/>
            <person name="Ferreira L.M."/>
            <person name="Gilbert H.J."/>
        </authorList>
    </citation>
    <scope>NUCLEOTIDE SEQUENCE [GENOMIC DNA]</scope>
    <scope>IDENTIFICATION</scope>
    <scope>FUNCTION</scope>
    <scope>CATALYTIC ACTIVITY</scope>
    <scope>SUBCELLULAR LOCATION</scope>
    <scope>INDUCTION</scope>
</reference>
<evidence type="ECO:0000250" key="1"/>
<evidence type="ECO:0000255" key="2"/>
<evidence type="ECO:0000255" key="3">
    <source>
        <dbReference type="PROSITE-ProRule" id="PRU01097"/>
    </source>
</evidence>
<evidence type="ECO:0000255" key="4">
    <source>
        <dbReference type="PROSITE-ProRule" id="PRU10062"/>
    </source>
</evidence>
<evidence type="ECO:0000256" key="5">
    <source>
        <dbReference type="SAM" id="MobiDB-lite"/>
    </source>
</evidence>
<evidence type="ECO:0000269" key="6">
    <source>
    </source>
</evidence>
<evidence type="ECO:0000305" key="7"/>
<keyword id="KW-0119">Carbohydrate metabolism</keyword>
<keyword id="KW-0326">Glycosidase</keyword>
<keyword id="KW-0378">Hydrolase</keyword>
<keyword id="KW-0624">Polysaccharide degradation</keyword>
<keyword id="KW-0964">Secreted</keyword>
<keyword id="KW-0732">Signal</keyword>
<keyword id="KW-0858">Xylan degradation</keyword>
<protein>
    <recommendedName>
        <fullName>Endo-1,4-beta-xylanase Xyn11B</fullName>
        <shortName>Xylanase 11B</shortName>
        <ecNumber>3.2.1.8</ecNumber>
    </recommendedName>
    <alternativeName>
        <fullName>1,4-beta-D-xylan xylanohydrolase</fullName>
    </alternativeName>
</protein>
<accession>Q8VP72</accession>
<name>XY11B_CELJA</name>
<gene>
    <name type="primary">xyn11B</name>
</gene>
<organism>
    <name type="scientific">Cellvibrio japonicus</name>
    <name type="common">Pseudomonas fluorescens subsp. cellulosa</name>
    <dbReference type="NCBI Taxonomy" id="155077"/>
    <lineage>
        <taxon>Bacteria</taxon>
        <taxon>Pseudomonadati</taxon>
        <taxon>Pseudomonadota</taxon>
        <taxon>Gammaproteobacteria</taxon>
        <taxon>Cellvibrionales</taxon>
        <taxon>Cellvibrionaceae</taxon>
        <taxon>Cellvibrio</taxon>
    </lineage>
</organism>
<dbReference type="EC" id="3.2.1.8"/>
<dbReference type="EMBL" id="AY065640">
    <property type="protein sequence ID" value="AAL57754.1"/>
    <property type="molecule type" value="Genomic_DNA"/>
</dbReference>
<dbReference type="SMR" id="Q8VP72"/>
<dbReference type="CAZy" id="CBM60">
    <property type="family name" value="Carbohydrate-Binding Module Family 60"/>
</dbReference>
<dbReference type="CAZy" id="GH11">
    <property type="family name" value="Glycoside Hydrolase Family 11"/>
</dbReference>
<dbReference type="UniPathway" id="UPA00114"/>
<dbReference type="GO" id="GO:0005576">
    <property type="term" value="C:extracellular region"/>
    <property type="evidence" value="ECO:0007669"/>
    <property type="project" value="UniProtKB-SubCell"/>
</dbReference>
<dbReference type="GO" id="GO:0031176">
    <property type="term" value="F:endo-1,4-beta-xylanase activity"/>
    <property type="evidence" value="ECO:0007669"/>
    <property type="project" value="UniProtKB-EC"/>
</dbReference>
<dbReference type="GO" id="GO:0045493">
    <property type="term" value="P:xylan catabolic process"/>
    <property type="evidence" value="ECO:0007669"/>
    <property type="project" value="UniProtKB-UniPathway"/>
</dbReference>
<dbReference type="Gene3D" id="2.60.120.180">
    <property type="match status" value="1"/>
</dbReference>
<dbReference type="Gene3D" id="2.60.60.40">
    <property type="match status" value="1"/>
</dbReference>
<dbReference type="InterPro" id="IPR031768">
    <property type="entry name" value="CBM60_xylan-bd"/>
</dbReference>
<dbReference type="InterPro" id="IPR013320">
    <property type="entry name" value="ConA-like_dom_sf"/>
</dbReference>
<dbReference type="InterPro" id="IPR013319">
    <property type="entry name" value="GH11/12"/>
</dbReference>
<dbReference type="InterPro" id="IPR018208">
    <property type="entry name" value="GH11_AS_1"/>
</dbReference>
<dbReference type="InterPro" id="IPR033123">
    <property type="entry name" value="GH11_dom"/>
</dbReference>
<dbReference type="InterPro" id="IPR001137">
    <property type="entry name" value="Glyco_hydro_11"/>
</dbReference>
<dbReference type="PANTHER" id="PTHR46828">
    <property type="entry name" value="ENDO-1,4-BETA-XYLANASE A-RELATED"/>
    <property type="match status" value="1"/>
</dbReference>
<dbReference type="PANTHER" id="PTHR46828:SF2">
    <property type="entry name" value="ENDO-1,4-BETA-XYLANASE A-RELATED"/>
    <property type="match status" value="1"/>
</dbReference>
<dbReference type="Pfam" id="PF16841">
    <property type="entry name" value="CBM60"/>
    <property type="match status" value="1"/>
</dbReference>
<dbReference type="Pfam" id="PF00457">
    <property type="entry name" value="Glyco_hydro_11"/>
    <property type="match status" value="1"/>
</dbReference>
<dbReference type="PRINTS" id="PR00911">
    <property type="entry name" value="GLHYDRLASE11"/>
</dbReference>
<dbReference type="SUPFAM" id="SSF49899">
    <property type="entry name" value="Concanavalin A-like lectins/glucanases"/>
    <property type="match status" value="1"/>
</dbReference>
<dbReference type="PROSITE" id="PS00776">
    <property type="entry name" value="GH11_1"/>
    <property type="match status" value="1"/>
</dbReference>
<dbReference type="PROSITE" id="PS51761">
    <property type="entry name" value="GH11_3"/>
    <property type="match status" value="1"/>
</dbReference>
<proteinExistence type="evidence at protein level"/>
<feature type="signal peptide" evidence="2">
    <location>
        <begin position="1"/>
        <end position="27"/>
    </location>
</feature>
<feature type="chain" id="PRO_0000424661" description="Endo-1,4-beta-xylanase Xyn11B">
    <location>
        <begin position="28"/>
        <end position="357"/>
    </location>
</feature>
<feature type="domain" description="GH11" evidence="3">
    <location>
        <begin position="29"/>
        <end position="226"/>
    </location>
</feature>
<feature type="region of interest" description="Disordered" evidence="5">
    <location>
        <begin position="220"/>
        <end position="245"/>
    </location>
</feature>
<feature type="active site" description="Nucleophile" evidence="4">
    <location>
        <position position="116"/>
    </location>
</feature>
<feature type="active site" description="Proton donor" evidence="1">
    <location>
        <position position="213"/>
    </location>
</feature>
<sequence>MKIFQNTKNVIVSIAWAAALCTSAVSAQTLTSNSTGTNNGFYYTFWKDSGDASMTLLSGGRYQSSWNSSTNNWVGGKGWNPGSSSRVISYSGYYGVDSSQNSYLALYGWTRSPLIEYYVIESYGSYNPASCSGGTDYGSFQSDGATYNVRRCQRVNQPSIDGNQTFYQYFSVRNPKKGFGNISGTITFANHANFWATKGLNLGNHNYQVLATEGYQSRGSSDITVSQGGSSGGGNSSSSSSASGGGSKIIVVRARGTAGGESITLRVGNTNVATWTLTTTMTNYTATTSASGGSLVQYTNDSGNRDVQVDYISVNGSIRQSEDQTYNTGVYQNGSCGGGNGRSEWLHCNGAIGYGDI</sequence>